<comment type="function">
    <text evidence="2">Lipid transfer protein required for autophagosome completion and peroxisome degradation. Tethers the edge of the isolation membrane (IM) to the endoplasmic reticulum (ER) and mediates direct lipid transfer from ER to IM for IM expansion. ATG2/SPO72 binds to the ER exit site (ERES), which is the membrane source for autophagosome formation, using basic residues in its N-terminal region (NR) and to the expanding edge of the IM through its C-terminal region. The latter binding is assisted by an ATG18-PtdIns3P interaction. ATG2/SPO72 then extracts phospholipids from the membrane source using its NR and transfers them to ATG9 to the IM through its predicted beta-sheet-rich structure for membrane expansion.</text>
</comment>
<comment type="catalytic activity">
    <reaction evidence="1">
        <text>a 1,2-diacyl-sn-glycero-3-phosphocholine(in) = a 1,2-diacyl-sn-glycero-3-phosphocholine(out)</text>
        <dbReference type="Rhea" id="RHEA:38571"/>
        <dbReference type="ChEBI" id="CHEBI:57643"/>
    </reaction>
</comment>
<comment type="catalytic activity">
    <reaction evidence="1">
        <text>a 1,2-diacyl-sn-glycero-3-phospho-L-serine(in) = a 1,2-diacyl-sn-glycero-3-phospho-L-serine(out)</text>
        <dbReference type="Rhea" id="RHEA:38663"/>
        <dbReference type="ChEBI" id="CHEBI:57262"/>
    </reaction>
</comment>
<comment type="catalytic activity">
    <reaction evidence="1">
        <text>a 1,2-diacyl-sn-glycero-3-phosphoethanolamine(in) = a 1,2-diacyl-sn-glycero-3-phosphoethanolamine(out)</text>
        <dbReference type="Rhea" id="RHEA:38895"/>
        <dbReference type="ChEBI" id="CHEBI:64612"/>
    </reaction>
</comment>
<comment type="subcellular location">
    <subcellularLocation>
        <location evidence="2">Preautophagosomal structure membrane</location>
        <topology evidence="2">Peripheral membrane protein</topology>
    </subcellularLocation>
    <subcellularLocation>
        <location evidence="2">Endoplasmic reticulum membrane</location>
        <topology evidence="2">Peripheral membrane protein</topology>
    </subcellularLocation>
</comment>
<comment type="similarity">
    <text evidence="4">Belongs to the ATG2 family.</text>
</comment>
<reference key="1">
    <citation type="journal article" date="2004" name="Proc. Natl. Acad. Sci. U.S.A.">
        <title>The diploid genome sequence of Candida albicans.</title>
        <authorList>
            <person name="Jones T."/>
            <person name="Federspiel N.A."/>
            <person name="Chibana H."/>
            <person name="Dungan J."/>
            <person name="Kalman S."/>
            <person name="Magee B.B."/>
            <person name="Newport G."/>
            <person name="Thorstenson Y.R."/>
            <person name="Agabian N."/>
            <person name="Magee P.T."/>
            <person name="Davis R.W."/>
            <person name="Scherer S."/>
        </authorList>
    </citation>
    <scope>NUCLEOTIDE SEQUENCE [LARGE SCALE GENOMIC DNA]</scope>
    <source>
        <strain>SC5314 / ATCC MYA-2876</strain>
    </source>
</reference>
<reference key="2">
    <citation type="journal article" date="2007" name="Genome Biol.">
        <title>Assembly of the Candida albicans genome into sixteen supercontigs aligned on the eight chromosomes.</title>
        <authorList>
            <person name="van het Hoog M."/>
            <person name="Rast T.J."/>
            <person name="Martchenko M."/>
            <person name="Grindle S."/>
            <person name="Dignard D."/>
            <person name="Hogues H."/>
            <person name="Cuomo C."/>
            <person name="Berriman M."/>
            <person name="Scherer S."/>
            <person name="Magee B.B."/>
            <person name="Whiteway M."/>
            <person name="Chibana H."/>
            <person name="Nantel A."/>
            <person name="Magee P.T."/>
        </authorList>
    </citation>
    <scope>GENOME REANNOTATION</scope>
    <source>
        <strain>SC5314 / ATCC MYA-2876</strain>
    </source>
</reference>
<reference key="3">
    <citation type="journal article" date="2013" name="Genome Biol.">
        <title>Assembly of a phased diploid Candida albicans genome facilitates allele-specific measurements and provides a simple model for repeat and indel structure.</title>
        <authorList>
            <person name="Muzzey D."/>
            <person name="Schwartz K."/>
            <person name="Weissman J.S."/>
            <person name="Sherlock G."/>
        </authorList>
    </citation>
    <scope>NUCLEOTIDE SEQUENCE [LARGE SCALE GENOMIC DNA]</scope>
    <scope>GENOME REANNOTATION</scope>
    <source>
        <strain>SC5314 / ATCC MYA-2876</strain>
    </source>
</reference>
<protein>
    <recommendedName>
        <fullName>Autophagy-related protein 2</fullName>
    </recommendedName>
</protein>
<name>ATG2_CANAL</name>
<proteinExistence type="inferred from homology"/>
<dbReference type="EMBL" id="CP017624">
    <property type="protein sequence ID" value="AOW27611.1"/>
    <property type="molecule type" value="Genomic_DNA"/>
</dbReference>
<dbReference type="RefSeq" id="XP_714289.2">
    <property type="nucleotide sequence ID" value="XM_709196.2"/>
</dbReference>
<dbReference type="FunCoup" id="Q59X11">
    <property type="interactions" value="54"/>
</dbReference>
<dbReference type="STRING" id="237561.Q59X11"/>
<dbReference type="EnsemblFungi" id="C2_06010W_A-T">
    <property type="protein sequence ID" value="C2_06010W_A-T-p1"/>
    <property type="gene ID" value="C2_06010W_A"/>
</dbReference>
<dbReference type="GeneID" id="3644072"/>
<dbReference type="KEGG" id="cal:CAALFM_C206010WA"/>
<dbReference type="CGD" id="CAL0000178327">
    <property type="gene designation" value="SPO72"/>
</dbReference>
<dbReference type="VEuPathDB" id="FungiDB:C2_06010W_A"/>
<dbReference type="eggNOG" id="KOG2993">
    <property type="taxonomic scope" value="Eukaryota"/>
</dbReference>
<dbReference type="HOGENOM" id="CLU_000626_3_0_1"/>
<dbReference type="InParanoid" id="Q59X11"/>
<dbReference type="OrthoDB" id="18982at2759"/>
<dbReference type="PRO" id="PR:Q59X11"/>
<dbReference type="Proteomes" id="UP000000559">
    <property type="component" value="Chromosome 2"/>
</dbReference>
<dbReference type="GO" id="GO:0005789">
    <property type="term" value="C:endoplasmic reticulum membrane"/>
    <property type="evidence" value="ECO:0007669"/>
    <property type="project" value="UniProtKB-SubCell"/>
</dbReference>
<dbReference type="GO" id="GO:0061908">
    <property type="term" value="C:phagophore"/>
    <property type="evidence" value="ECO:0000318"/>
    <property type="project" value="GO_Central"/>
</dbReference>
<dbReference type="GO" id="GO:0000407">
    <property type="term" value="C:phagophore assembly site"/>
    <property type="evidence" value="ECO:0000318"/>
    <property type="project" value="GO_Central"/>
</dbReference>
<dbReference type="GO" id="GO:0034045">
    <property type="term" value="C:phagophore assembly site membrane"/>
    <property type="evidence" value="ECO:0007669"/>
    <property type="project" value="UniProtKB-SubCell"/>
</dbReference>
<dbReference type="GO" id="GO:0032266">
    <property type="term" value="F:phosphatidylinositol-3-phosphate binding"/>
    <property type="evidence" value="ECO:0000318"/>
    <property type="project" value="GO_Central"/>
</dbReference>
<dbReference type="GO" id="GO:0043495">
    <property type="term" value="F:protein-membrane adaptor activity"/>
    <property type="evidence" value="ECO:0000318"/>
    <property type="project" value="GO_Central"/>
</dbReference>
<dbReference type="GO" id="GO:0000045">
    <property type="term" value="P:autophagosome assembly"/>
    <property type="evidence" value="ECO:0000318"/>
    <property type="project" value="GO_Central"/>
</dbReference>
<dbReference type="GO" id="GO:0000422">
    <property type="term" value="P:autophagy of mitochondrion"/>
    <property type="evidence" value="ECO:0000318"/>
    <property type="project" value="GO_Central"/>
</dbReference>
<dbReference type="GO" id="GO:0061723">
    <property type="term" value="P:glycophagy"/>
    <property type="evidence" value="ECO:0000318"/>
    <property type="project" value="GO_Central"/>
</dbReference>
<dbReference type="GO" id="GO:0006869">
    <property type="term" value="P:lipid transport"/>
    <property type="evidence" value="ECO:0007669"/>
    <property type="project" value="UniProtKB-KW"/>
</dbReference>
<dbReference type="GO" id="GO:0000425">
    <property type="term" value="P:pexophagy"/>
    <property type="evidence" value="ECO:0000318"/>
    <property type="project" value="GO_Central"/>
</dbReference>
<dbReference type="GO" id="GO:0034727">
    <property type="term" value="P:piecemeal microautophagy of the nucleus"/>
    <property type="evidence" value="ECO:0000318"/>
    <property type="project" value="GO_Central"/>
</dbReference>
<dbReference type="GO" id="GO:0015031">
    <property type="term" value="P:protein transport"/>
    <property type="evidence" value="ECO:0007669"/>
    <property type="project" value="UniProtKB-KW"/>
</dbReference>
<dbReference type="GO" id="GO:0061709">
    <property type="term" value="P:reticulophagy"/>
    <property type="evidence" value="ECO:0000318"/>
    <property type="project" value="GO_Central"/>
</dbReference>
<dbReference type="InterPro" id="IPR026849">
    <property type="entry name" value="ATG2"/>
</dbReference>
<dbReference type="PANTHER" id="PTHR13190">
    <property type="entry name" value="AUTOPHAGY-RELATED 2, ISOFORM A"/>
    <property type="match status" value="1"/>
</dbReference>
<dbReference type="PANTHER" id="PTHR13190:SF1">
    <property type="entry name" value="AUTOPHAGY-RELATED 2, ISOFORM A"/>
    <property type="match status" value="1"/>
</dbReference>
<dbReference type="Pfam" id="PF13329">
    <property type="entry name" value="ATG2_CAD"/>
    <property type="match status" value="1"/>
</dbReference>
<sequence>MIPQWIPQNIQKRLLLYVLQQLSLFSEIDLPNLEEVSLNNIILKDVALDPEKVGKLPGCNLRYGQIGSLELTTISGISGVNIDVNDAEIVISPDFDIDENMTNQVAFSLAQSTANLANTIMLNTNDGSDMNETSDPASEDDDEDDIDDKITKPIPPKRRTSSVTGNKTTALGGVMQKAVEIALSRLSIKVNSLKIKIVSDLTDLQMEVDSVSINSTNGTRTVSIKGVKLRTLKPNVNPGEGFQSGHAPQKKQQGSDNDSPTDANKHGSENDNDDDDDDYGNESLMDSMVFSHEEASSIYMSATSRSFEKSAASGIPGEVDNKATDKEDYSEDPPIIFYMDDCTIEFDGLSTISNLEIEVGNINLAFTPLTPTLVSIFQGVAKSLKIKYYQQKKKTKSRSAQRNEKFPQYTNDNDEIPEDQSESDDASHEPFFNRFKVNSFVISATSALSENGLFANKNGINIIFFNINIKQKNELLLYGGVETFKIIRFEDDNTYEIFHFDKPQSAPSSAPSYSGSNDVAGTSSSLSSSTGSATSKADIRFEVFKKSEESDDLEVTVLMAKSAHFNFDLQSLLILSNFAKAVSSIYDEYGLLKSVIDKLDTRDKKWSGGTNNSKMSSKSEFILQTATIFVNFIISDDCQLQLIVFPIKFNLRQEQLTISKILLNCTNGDTQVEGVIILTDVSLITKNQEFRAYFQSTNTTTSANTHPLPRKTTMNSKLSVIVQKFSSNVSMDRLKFIGEKLKNFSNEFIERSPTQSNSLENSFLNEPVERQRLESSLHMNSSLFSTRRPGRRLGLGFNNSPSVFLGSTRVTMASFQVCFKEATFNITGVFPKFGNFSVQMSDISFYKLKNDILGHILSVSVQRKKGDLVENLIHQYQDLSPNSLEFPLLSIKCKLGDKTTKIEITARNLVLEYYTNWLLLMDKEESIIDAVEEEIIEKVTPSQHSSSQNKLDIRYSMYDCMVGLTPGRLSCKSYLIIGKGDSDISFGVDQFYVKCSFRNISMVLIDDTKNILPFSEPSTSSSSSSSSATRQTPYVYIQPLDYYSKLGYIHLGLINVAHVGITFNTDIEALKDRNEKLGIKDSLTFVDLKTNLDECQFNLCADTANTLIQLVNDLKLPLNFKDEDKMKVDFADGINVMQGIDQNIFKGLTETLTELNLNGTENGSTSESSSQEASSLMFEEGHFDRGNRSLYDNSHVDPLHININLSKVKIYLHDGYDWKDTRKAIRGAVKNFETAQTAKTVAKEKEKKRKVEFETRDIEVQEDVFQETLFQSIHVVAPRNQNARDMATSINLDLQNDKDGESRDVSTANSGKSYKNLKLRRSAKHKLLFDLKSIEVGVNVYSTRDPRRDKTDENMKYELLNFIELRVGTVDIYDNVSTSTWNKFLSYMNILGDREIGTSMVKVSILNVRPDPAMVSGEAIMNVSVLPLRLHIDQDALDFLVRFFEFKDERFELPPDEMVYIQKFEISSIKLKLDYKPKKVDYAGLRSGKAGEFANFFTLDGSTLTLPKVKLFGIPGAPKIGIGLGRAWLPVFQSTQVIGIISGVSPLRSVVNIGGGFKDLVAIPISEYKKDGRLWRSIQKGTVSFAKTTGYEILNLGVKLASGTQVLLEQGEEMLGGEGSSVRSPNLGGSDNRRNSNASDELPVEVAKPKSQNNLLVSSQILNKASTKIETHSYDTKKLYSNIELDDEDMDDNRINGINKELLSKSIFLLAPAEEKLAKLQPHTKGNHEGLTEEEEDEDEDEEYQLYAYENEEELQEKLVSLYSNQPETIEQGLKSAYKSLGTNFKLTKKQLLKLRRELAETDTIQDSMVTVLKNSPIILMRPLIGSTEAVSKLLMGVGNQIDGKKLVEKKDKYPT</sequence>
<accession>Q59X11</accession>
<accession>A0A1D8PHI8</accession>
<gene>
    <name type="primary">SPO72</name>
    <name type="synonym">ATG2</name>
    <name type="ordered locus">CAALFM_C206010WA</name>
    <name type="ORF">CaO19.11601</name>
    <name type="ORF">CaO19.4119</name>
</gene>
<evidence type="ECO:0000250" key="1">
    <source>
        <dbReference type="UniProtKB" id="O94649"/>
    </source>
</evidence>
<evidence type="ECO:0000250" key="2">
    <source>
        <dbReference type="UniProtKB" id="P53855"/>
    </source>
</evidence>
<evidence type="ECO:0000256" key="3">
    <source>
        <dbReference type="SAM" id="MobiDB-lite"/>
    </source>
</evidence>
<evidence type="ECO:0000305" key="4"/>
<keyword id="KW-0072">Autophagy</keyword>
<keyword id="KW-0256">Endoplasmic reticulum</keyword>
<keyword id="KW-0445">Lipid transport</keyword>
<keyword id="KW-0472">Membrane</keyword>
<keyword id="KW-0653">Protein transport</keyword>
<keyword id="KW-1185">Reference proteome</keyword>
<keyword id="KW-0813">Transport</keyword>
<organism>
    <name type="scientific">Candida albicans (strain SC5314 / ATCC MYA-2876)</name>
    <name type="common">Yeast</name>
    <dbReference type="NCBI Taxonomy" id="237561"/>
    <lineage>
        <taxon>Eukaryota</taxon>
        <taxon>Fungi</taxon>
        <taxon>Dikarya</taxon>
        <taxon>Ascomycota</taxon>
        <taxon>Saccharomycotina</taxon>
        <taxon>Pichiomycetes</taxon>
        <taxon>Debaryomycetaceae</taxon>
        <taxon>Candida/Lodderomyces clade</taxon>
        <taxon>Candida</taxon>
    </lineage>
</organism>
<feature type="chain" id="PRO_0000215827" description="Autophagy-related protein 2">
    <location>
        <begin position="1"/>
        <end position="1856"/>
    </location>
</feature>
<feature type="region of interest" description="Disordered" evidence="3">
    <location>
        <begin position="123"/>
        <end position="167"/>
    </location>
</feature>
<feature type="region of interest" description="Disordered" evidence="3">
    <location>
        <begin position="229"/>
        <end position="283"/>
    </location>
</feature>
<feature type="region of interest" description="Disordered" evidence="3">
    <location>
        <begin position="309"/>
        <end position="328"/>
    </location>
</feature>
<feature type="region of interest" description="Disordered" evidence="3">
    <location>
        <begin position="395"/>
        <end position="428"/>
    </location>
</feature>
<feature type="region of interest" description="Disordered" evidence="3">
    <location>
        <begin position="1157"/>
        <end position="1177"/>
    </location>
</feature>
<feature type="region of interest" description="Disordered" evidence="3">
    <location>
        <begin position="1614"/>
        <end position="1647"/>
    </location>
</feature>
<feature type="region of interest" description="Disordered" evidence="3">
    <location>
        <begin position="1719"/>
        <end position="1741"/>
    </location>
</feature>
<feature type="compositionally biased region" description="Acidic residues" evidence="3">
    <location>
        <begin position="137"/>
        <end position="147"/>
    </location>
</feature>
<feature type="compositionally biased region" description="Polar residues" evidence="3">
    <location>
        <begin position="250"/>
        <end position="262"/>
    </location>
</feature>
<feature type="compositionally biased region" description="Acidic residues" evidence="3">
    <location>
        <begin position="270"/>
        <end position="280"/>
    </location>
</feature>
<feature type="compositionally biased region" description="Acidic residues" evidence="3">
    <location>
        <begin position="412"/>
        <end position="424"/>
    </location>
</feature>
<feature type="compositionally biased region" description="Low complexity" evidence="3">
    <location>
        <begin position="1157"/>
        <end position="1170"/>
    </location>
</feature>
<feature type="compositionally biased region" description="Polar residues" evidence="3">
    <location>
        <begin position="1621"/>
        <end position="1639"/>
    </location>
</feature>
<feature type="compositionally biased region" description="Acidic residues" evidence="3">
    <location>
        <begin position="1732"/>
        <end position="1741"/>
    </location>
</feature>